<sequence>MSDYLVKALAYDGMARVYAAVTTETIKEAQRRHDTWSVSSAALGRTMTGTLFLGAMQKEDQKITVKIEGDGPIGPIVADSNAQGQIRGYVTNPHVHFSELNEAGKLDVRRGVGTSGMLSVVKDLGFGENFTGQTPIISGEIGEDFTYYLATSEQINSSVGVGVLVNPDDTIEAAGGFMLQLLPGATDEIIDEIEKNLTALPTVSRMIEAGETPESILAKLAGGEDKLQILEKIPVSFECNCSKERFGSAIISLGKEEIRSMIEEDHGAEAECHFCRNAYDFSEEELEKLYDEAK</sequence>
<name>HSLO_LISMC</name>
<gene>
    <name evidence="1" type="primary">hslO</name>
    <name type="ordered locus">Lm4b_00220</name>
</gene>
<evidence type="ECO:0000255" key="1">
    <source>
        <dbReference type="HAMAP-Rule" id="MF_00117"/>
    </source>
</evidence>
<reference key="1">
    <citation type="journal article" date="2012" name="BMC Genomics">
        <title>Comparative genomics and transcriptomics of lineages I, II, and III strains of Listeria monocytogenes.</title>
        <authorList>
            <person name="Hain T."/>
            <person name="Ghai R."/>
            <person name="Billion A."/>
            <person name="Kuenne C.T."/>
            <person name="Steinweg C."/>
            <person name="Izar B."/>
            <person name="Mohamed W."/>
            <person name="Mraheil M."/>
            <person name="Domann E."/>
            <person name="Schaffrath S."/>
            <person name="Karst U."/>
            <person name="Goesmann A."/>
            <person name="Oehm S."/>
            <person name="Puhler A."/>
            <person name="Merkl R."/>
            <person name="Vorwerk S."/>
            <person name="Glaser P."/>
            <person name="Garrido P."/>
            <person name="Rusniok C."/>
            <person name="Buchrieser C."/>
            <person name="Goebel W."/>
            <person name="Chakraborty T."/>
        </authorList>
    </citation>
    <scope>NUCLEOTIDE SEQUENCE [LARGE SCALE GENOMIC DNA]</scope>
    <source>
        <strain>CLIP80459</strain>
    </source>
</reference>
<comment type="function">
    <text evidence="1">Redox regulated molecular chaperone. Protects both thermally unfolding and oxidatively damaged proteins from irreversible aggregation. Plays an important role in the bacterial defense system toward oxidative stress.</text>
</comment>
<comment type="subcellular location">
    <subcellularLocation>
        <location evidence="1">Cytoplasm</location>
    </subcellularLocation>
</comment>
<comment type="PTM">
    <text evidence="1">Under oxidizing conditions two disulfide bonds are formed involving the reactive cysteines. Under reducing conditions zinc is bound to the reactive cysteines and the protein is inactive.</text>
</comment>
<comment type="similarity">
    <text evidence="1">Belongs to the HSP33 family.</text>
</comment>
<organism>
    <name type="scientific">Listeria monocytogenes serotype 4b (strain CLIP80459)</name>
    <dbReference type="NCBI Taxonomy" id="568819"/>
    <lineage>
        <taxon>Bacteria</taxon>
        <taxon>Bacillati</taxon>
        <taxon>Bacillota</taxon>
        <taxon>Bacilli</taxon>
        <taxon>Bacillales</taxon>
        <taxon>Listeriaceae</taxon>
        <taxon>Listeria</taxon>
    </lineage>
</organism>
<protein>
    <recommendedName>
        <fullName evidence="1">33 kDa chaperonin</fullName>
    </recommendedName>
    <alternativeName>
        <fullName evidence="1">Heat shock protein 33 homolog</fullName>
        <shortName evidence="1">HSP33</shortName>
    </alternativeName>
</protein>
<accession>C1KYF5</accession>
<keyword id="KW-0143">Chaperone</keyword>
<keyword id="KW-0963">Cytoplasm</keyword>
<keyword id="KW-1015">Disulfide bond</keyword>
<keyword id="KW-0676">Redox-active center</keyword>
<keyword id="KW-0862">Zinc</keyword>
<proteinExistence type="inferred from homology"/>
<dbReference type="EMBL" id="FM242711">
    <property type="protein sequence ID" value="CAS04010.1"/>
    <property type="molecule type" value="Genomic_DNA"/>
</dbReference>
<dbReference type="RefSeq" id="WP_012681033.1">
    <property type="nucleotide sequence ID" value="NC_012488.1"/>
</dbReference>
<dbReference type="SMR" id="C1KYF5"/>
<dbReference type="KEGG" id="lmc:Lm4b_00220"/>
<dbReference type="HOGENOM" id="CLU_054493_1_0_9"/>
<dbReference type="GO" id="GO:0005737">
    <property type="term" value="C:cytoplasm"/>
    <property type="evidence" value="ECO:0007669"/>
    <property type="project" value="UniProtKB-SubCell"/>
</dbReference>
<dbReference type="GO" id="GO:0044183">
    <property type="term" value="F:protein folding chaperone"/>
    <property type="evidence" value="ECO:0007669"/>
    <property type="project" value="TreeGrafter"/>
</dbReference>
<dbReference type="GO" id="GO:0051082">
    <property type="term" value="F:unfolded protein binding"/>
    <property type="evidence" value="ECO:0007669"/>
    <property type="project" value="UniProtKB-UniRule"/>
</dbReference>
<dbReference type="GO" id="GO:0042026">
    <property type="term" value="P:protein refolding"/>
    <property type="evidence" value="ECO:0007669"/>
    <property type="project" value="TreeGrafter"/>
</dbReference>
<dbReference type="CDD" id="cd00498">
    <property type="entry name" value="Hsp33"/>
    <property type="match status" value="1"/>
</dbReference>
<dbReference type="Gene3D" id="3.55.30.10">
    <property type="entry name" value="Hsp33 domain"/>
    <property type="match status" value="1"/>
</dbReference>
<dbReference type="Gene3D" id="3.90.1280.10">
    <property type="entry name" value="HSP33 redox switch-like"/>
    <property type="match status" value="1"/>
</dbReference>
<dbReference type="HAMAP" id="MF_00117">
    <property type="entry name" value="HslO"/>
    <property type="match status" value="1"/>
</dbReference>
<dbReference type="InterPro" id="IPR000397">
    <property type="entry name" value="Heat_shock_Hsp33"/>
</dbReference>
<dbReference type="InterPro" id="IPR016154">
    <property type="entry name" value="Heat_shock_Hsp33_C"/>
</dbReference>
<dbReference type="InterPro" id="IPR016153">
    <property type="entry name" value="Heat_shock_Hsp33_N"/>
</dbReference>
<dbReference type="NCBIfam" id="NF001033">
    <property type="entry name" value="PRK00114.1"/>
    <property type="match status" value="1"/>
</dbReference>
<dbReference type="PANTHER" id="PTHR30111">
    <property type="entry name" value="33 KDA CHAPERONIN"/>
    <property type="match status" value="1"/>
</dbReference>
<dbReference type="PANTHER" id="PTHR30111:SF1">
    <property type="entry name" value="33 KDA CHAPERONIN"/>
    <property type="match status" value="1"/>
</dbReference>
<dbReference type="Pfam" id="PF01430">
    <property type="entry name" value="HSP33"/>
    <property type="match status" value="1"/>
</dbReference>
<dbReference type="PIRSF" id="PIRSF005261">
    <property type="entry name" value="Heat_shock_Hsp33"/>
    <property type="match status" value="1"/>
</dbReference>
<dbReference type="SUPFAM" id="SSF64397">
    <property type="entry name" value="Hsp33 domain"/>
    <property type="match status" value="1"/>
</dbReference>
<dbReference type="SUPFAM" id="SSF118352">
    <property type="entry name" value="HSP33 redox switch-like"/>
    <property type="match status" value="1"/>
</dbReference>
<feature type="chain" id="PRO_1000202999" description="33 kDa chaperonin">
    <location>
        <begin position="1"/>
        <end position="294"/>
    </location>
</feature>
<feature type="disulfide bond" description="Redox-active" evidence="1">
    <location>
        <begin position="239"/>
        <end position="241"/>
    </location>
</feature>
<feature type="disulfide bond" description="Redox-active" evidence="1">
    <location>
        <begin position="272"/>
        <end position="275"/>
    </location>
</feature>